<name>THIM_ECO55</name>
<keyword id="KW-0067">ATP-binding</keyword>
<keyword id="KW-0418">Kinase</keyword>
<keyword id="KW-0460">Magnesium</keyword>
<keyword id="KW-0479">Metal-binding</keyword>
<keyword id="KW-0547">Nucleotide-binding</keyword>
<keyword id="KW-1185">Reference proteome</keyword>
<keyword id="KW-0784">Thiamine biosynthesis</keyword>
<keyword id="KW-0808">Transferase</keyword>
<reference key="1">
    <citation type="journal article" date="2009" name="PLoS Genet.">
        <title>Organised genome dynamics in the Escherichia coli species results in highly diverse adaptive paths.</title>
        <authorList>
            <person name="Touchon M."/>
            <person name="Hoede C."/>
            <person name="Tenaillon O."/>
            <person name="Barbe V."/>
            <person name="Baeriswyl S."/>
            <person name="Bidet P."/>
            <person name="Bingen E."/>
            <person name="Bonacorsi S."/>
            <person name="Bouchier C."/>
            <person name="Bouvet O."/>
            <person name="Calteau A."/>
            <person name="Chiapello H."/>
            <person name="Clermont O."/>
            <person name="Cruveiller S."/>
            <person name="Danchin A."/>
            <person name="Diard M."/>
            <person name="Dossat C."/>
            <person name="Karoui M.E."/>
            <person name="Frapy E."/>
            <person name="Garry L."/>
            <person name="Ghigo J.M."/>
            <person name="Gilles A.M."/>
            <person name="Johnson J."/>
            <person name="Le Bouguenec C."/>
            <person name="Lescat M."/>
            <person name="Mangenot S."/>
            <person name="Martinez-Jehanne V."/>
            <person name="Matic I."/>
            <person name="Nassif X."/>
            <person name="Oztas S."/>
            <person name="Petit M.A."/>
            <person name="Pichon C."/>
            <person name="Rouy Z."/>
            <person name="Ruf C.S."/>
            <person name="Schneider D."/>
            <person name="Tourret J."/>
            <person name="Vacherie B."/>
            <person name="Vallenet D."/>
            <person name="Medigue C."/>
            <person name="Rocha E.P.C."/>
            <person name="Denamur E."/>
        </authorList>
    </citation>
    <scope>NUCLEOTIDE SEQUENCE [LARGE SCALE GENOMIC DNA]</scope>
    <source>
        <strain>55989 / EAEC</strain>
    </source>
</reference>
<evidence type="ECO:0000255" key="1">
    <source>
        <dbReference type="HAMAP-Rule" id="MF_00228"/>
    </source>
</evidence>
<feature type="chain" id="PRO_1000198118" description="Hydroxyethylthiazole kinase">
    <location>
        <begin position="1"/>
        <end position="262"/>
    </location>
</feature>
<feature type="binding site" evidence="1">
    <location>
        <position position="50"/>
    </location>
    <ligand>
        <name>substrate</name>
    </ligand>
</feature>
<feature type="binding site" evidence="1">
    <location>
        <position position="125"/>
    </location>
    <ligand>
        <name>ATP</name>
        <dbReference type="ChEBI" id="CHEBI:30616"/>
    </ligand>
</feature>
<feature type="binding site" evidence="1">
    <location>
        <position position="171"/>
    </location>
    <ligand>
        <name>ATP</name>
        <dbReference type="ChEBI" id="CHEBI:30616"/>
    </ligand>
</feature>
<feature type="binding site" evidence="1">
    <location>
        <position position="198"/>
    </location>
    <ligand>
        <name>substrate</name>
    </ligand>
</feature>
<dbReference type="EC" id="2.7.1.50" evidence="1"/>
<dbReference type="EMBL" id="CU928145">
    <property type="protein sequence ID" value="CAU98230.1"/>
    <property type="molecule type" value="Genomic_DNA"/>
</dbReference>
<dbReference type="RefSeq" id="WP_001195605.1">
    <property type="nucleotide sequence ID" value="NC_011748.1"/>
</dbReference>
<dbReference type="SMR" id="B7L9X5"/>
<dbReference type="GeneID" id="75205960"/>
<dbReference type="KEGG" id="eck:EC55989_2359"/>
<dbReference type="HOGENOM" id="CLU_019943_0_1_6"/>
<dbReference type="UniPathway" id="UPA00060">
    <property type="reaction ID" value="UER00139"/>
</dbReference>
<dbReference type="Proteomes" id="UP000000746">
    <property type="component" value="Chromosome"/>
</dbReference>
<dbReference type="GO" id="GO:0005524">
    <property type="term" value="F:ATP binding"/>
    <property type="evidence" value="ECO:0007669"/>
    <property type="project" value="UniProtKB-UniRule"/>
</dbReference>
<dbReference type="GO" id="GO:0004417">
    <property type="term" value="F:hydroxyethylthiazole kinase activity"/>
    <property type="evidence" value="ECO:0007669"/>
    <property type="project" value="UniProtKB-UniRule"/>
</dbReference>
<dbReference type="GO" id="GO:0000287">
    <property type="term" value="F:magnesium ion binding"/>
    <property type="evidence" value="ECO:0007669"/>
    <property type="project" value="UniProtKB-UniRule"/>
</dbReference>
<dbReference type="GO" id="GO:0009228">
    <property type="term" value="P:thiamine biosynthetic process"/>
    <property type="evidence" value="ECO:0007669"/>
    <property type="project" value="UniProtKB-KW"/>
</dbReference>
<dbReference type="GO" id="GO:0009229">
    <property type="term" value="P:thiamine diphosphate biosynthetic process"/>
    <property type="evidence" value="ECO:0007669"/>
    <property type="project" value="UniProtKB-UniRule"/>
</dbReference>
<dbReference type="CDD" id="cd01170">
    <property type="entry name" value="THZ_kinase"/>
    <property type="match status" value="1"/>
</dbReference>
<dbReference type="FunFam" id="3.40.1190.20:FF:000015">
    <property type="entry name" value="Hydroxyethylthiazole kinase"/>
    <property type="match status" value="1"/>
</dbReference>
<dbReference type="Gene3D" id="3.40.1190.20">
    <property type="match status" value="1"/>
</dbReference>
<dbReference type="HAMAP" id="MF_00228">
    <property type="entry name" value="Thz_kinase"/>
    <property type="match status" value="1"/>
</dbReference>
<dbReference type="InterPro" id="IPR000417">
    <property type="entry name" value="Hyethyz_kinase"/>
</dbReference>
<dbReference type="InterPro" id="IPR029056">
    <property type="entry name" value="Ribokinase-like"/>
</dbReference>
<dbReference type="NCBIfam" id="NF006830">
    <property type="entry name" value="PRK09355.1"/>
    <property type="match status" value="1"/>
</dbReference>
<dbReference type="NCBIfam" id="TIGR00694">
    <property type="entry name" value="thiM"/>
    <property type="match status" value="1"/>
</dbReference>
<dbReference type="Pfam" id="PF02110">
    <property type="entry name" value="HK"/>
    <property type="match status" value="1"/>
</dbReference>
<dbReference type="PIRSF" id="PIRSF000513">
    <property type="entry name" value="Thz_kinase"/>
    <property type="match status" value="1"/>
</dbReference>
<dbReference type="PRINTS" id="PR01099">
    <property type="entry name" value="HYETHTZKNASE"/>
</dbReference>
<dbReference type="SUPFAM" id="SSF53613">
    <property type="entry name" value="Ribokinase-like"/>
    <property type="match status" value="1"/>
</dbReference>
<sequence length="262" mass="27281">MQVDLLSSAQSAHALHLFHQHSPLVHCMTNDVVQTFTANTLLALGASPAMVIETEEASQFAAIASALLINVGTLTQPRAQAMRAAVEQAKSSQTPWTLDPVAVGALDYRRHFCHELLSFKPAAIRGNASEIMALAGIANGGRGVDTTDAAANAIPAAQTLARETGAIVVVTGEVDYVTDGHRAVGIHGGDPLMTKVVGTGCALSAVVAACCALPGDTLENVASACHWMKQAGERAVARSEGPGSFVPHFLDALWQLTQEVQA</sequence>
<organism>
    <name type="scientific">Escherichia coli (strain 55989 / EAEC)</name>
    <dbReference type="NCBI Taxonomy" id="585055"/>
    <lineage>
        <taxon>Bacteria</taxon>
        <taxon>Pseudomonadati</taxon>
        <taxon>Pseudomonadota</taxon>
        <taxon>Gammaproteobacteria</taxon>
        <taxon>Enterobacterales</taxon>
        <taxon>Enterobacteriaceae</taxon>
        <taxon>Escherichia</taxon>
    </lineage>
</organism>
<gene>
    <name evidence="1" type="primary">thiM</name>
    <name type="ordered locus">EC55989_2359</name>
</gene>
<proteinExistence type="inferred from homology"/>
<accession>B7L9X5</accession>
<comment type="function">
    <text evidence="1">Catalyzes the phosphorylation of the hydroxyl group of 4-methyl-5-beta-hydroxyethylthiazole (THZ).</text>
</comment>
<comment type="catalytic activity">
    <reaction evidence="1">
        <text>5-(2-hydroxyethyl)-4-methylthiazole + ATP = 4-methyl-5-(2-phosphooxyethyl)-thiazole + ADP + H(+)</text>
        <dbReference type="Rhea" id="RHEA:24212"/>
        <dbReference type="ChEBI" id="CHEBI:15378"/>
        <dbReference type="ChEBI" id="CHEBI:17957"/>
        <dbReference type="ChEBI" id="CHEBI:30616"/>
        <dbReference type="ChEBI" id="CHEBI:58296"/>
        <dbReference type="ChEBI" id="CHEBI:456216"/>
        <dbReference type="EC" id="2.7.1.50"/>
    </reaction>
</comment>
<comment type="cofactor">
    <cofactor evidence="1">
        <name>Mg(2+)</name>
        <dbReference type="ChEBI" id="CHEBI:18420"/>
    </cofactor>
</comment>
<comment type="pathway">
    <text evidence="1">Cofactor biosynthesis; thiamine diphosphate biosynthesis; 4-methyl-5-(2-phosphoethyl)-thiazole from 5-(2-hydroxyethyl)-4-methylthiazole: step 1/1.</text>
</comment>
<comment type="similarity">
    <text evidence="1">Belongs to the Thz kinase family.</text>
</comment>
<protein>
    <recommendedName>
        <fullName evidence="1">Hydroxyethylthiazole kinase</fullName>
        <ecNumber evidence="1">2.7.1.50</ecNumber>
    </recommendedName>
    <alternativeName>
        <fullName evidence="1">4-methyl-5-beta-hydroxyethylthiazole kinase</fullName>
        <shortName evidence="1">TH kinase</shortName>
        <shortName evidence="1">Thz kinase</shortName>
    </alternativeName>
</protein>